<comment type="function">
    <text evidence="1">May play a role in photosystem I and II biogenesis.</text>
</comment>
<comment type="subcellular location">
    <subcellularLocation>
        <location evidence="1">Plastid</location>
        <location evidence="1">Chloroplast thylakoid membrane</location>
        <topology evidence="1">Single-pass membrane protein</topology>
    </subcellularLocation>
</comment>
<comment type="similarity">
    <text evidence="1">Belongs to the PsbN family.</text>
</comment>
<comment type="caution">
    <text evidence="1">Originally thought to be a component of PSII; based on experiments in Synechocystis, N.tabacum and barley, and its absence from PSII in T.elongatus and T.vulcanus, this is probably not true.</text>
</comment>
<geneLocation type="chloroplast"/>
<gene>
    <name evidence="1" type="primary">psbN</name>
</gene>
<feature type="chain" id="PRO_0000207912" description="Protein PsbN">
    <location>
        <begin position="1"/>
        <end position="43"/>
    </location>
</feature>
<feature type="transmembrane region" description="Helical" evidence="1">
    <location>
        <begin position="7"/>
        <end position="27"/>
    </location>
</feature>
<name>PSBN_KLEBI</name>
<dbReference type="EMBL" id="AF482500">
    <property type="protein sequence ID" value="AAQ05923.1"/>
    <property type="molecule type" value="Genomic_DNA"/>
</dbReference>
<dbReference type="GO" id="GO:0009535">
    <property type="term" value="C:chloroplast thylakoid membrane"/>
    <property type="evidence" value="ECO:0007669"/>
    <property type="project" value="UniProtKB-SubCell"/>
</dbReference>
<dbReference type="GO" id="GO:0015979">
    <property type="term" value="P:photosynthesis"/>
    <property type="evidence" value="ECO:0007669"/>
    <property type="project" value="InterPro"/>
</dbReference>
<dbReference type="HAMAP" id="MF_00293">
    <property type="entry name" value="PSII_PsbN"/>
    <property type="match status" value="1"/>
</dbReference>
<dbReference type="InterPro" id="IPR003398">
    <property type="entry name" value="PSII_PsbN"/>
</dbReference>
<dbReference type="PANTHER" id="PTHR35326">
    <property type="entry name" value="PROTEIN PSBN"/>
    <property type="match status" value="1"/>
</dbReference>
<dbReference type="PANTHER" id="PTHR35326:SF3">
    <property type="entry name" value="PROTEIN PSBN"/>
    <property type="match status" value="1"/>
</dbReference>
<dbReference type="Pfam" id="PF02468">
    <property type="entry name" value="PsbN"/>
    <property type="match status" value="1"/>
</dbReference>
<accession>Q71KN5</accession>
<keyword id="KW-0150">Chloroplast</keyword>
<keyword id="KW-0472">Membrane</keyword>
<keyword id="KW-0934">Plastid</keyword>
<keyword id="KW-0793">Thylakoid</keyword>
<keyword id="KW-0812">Transmembrane</keyword>
<keyword id="KW-1133">Transmembrane helix</keyword>
<organism>
    <name type="scientific">Klebsormidium bilatum</name>
    <name type="common">Filamentous green alga</name>
    <dbReference type="NCBI Taxonomy" id="201239"/>
    <lineage>
        <taxon>Eukaryota</taxon>
        <taxon>Viridiplantae</taxon>
        <taxon>Streptophyta</taxon>
        <taxon>Klebsormidiophyceae</taxon>
        <taxon>Klebsormidiales</taxon>
        <taxon>Klebsormidiaceae</taxon>
        <taxon>Klebsormidium</taxon>
    </lineage>
</organism>
<evidence type="ECO:0000255" key="1">
    <source>
        <dbReference type="HAMAP-Rule" id="MF_00293"/>
    </source>
</evidence>
<sequence>MEPATLITIFLSCFLVGVTGYALYTAFGQPSKELRDPFEEHED</sequence>
<proteinExistence type="inferred from homology"/>
<protein>
    <recommendedName>
        <fullName evidence="1">Protein PsbN</fullName>
    </recommendedName>
</protein>
<reference key="1">
    <citation type="submission" date="2002-02" db="EMBL/GenBank/DDBJ databases">
        <title>psbB gene cluster in Charophyceae.</title>
        <authorList>
            <person name="Lee J."/>
            <person name="Manhart J.R."/>
        </authorList>
    </citation>
    <scope>NUCLEOTIDE SEQUENCE [GENOMIC DNA]</scope>
</reference>